<dbReference type="EMBL" id="Z68203">
    <property type="protein sequence ID" value="CAA92402.1"/>
    <property type="molecule type" value="Genomic_DNA"/>
</dbReference>
<dbReference type="EMBL" id="U00090">
    <property type="protein sequence ID" value="AAB91873.1"/>
    <property type="molecule type" value="Genomic_DNA"/>
</dbReference>
<dbReference type="RefSeq" id="NP_444086.1">
    <property type="nucleotide sequence ID" value="NC_000914.2"/>
</dbReference>
<dbReference type="RefSeq" id="WP_010875177.1">
    <property type="nucleotide sequence ID" value="NC_000914.2"/>
</dbReference>
<dbReference type="SMR" id="Q53195"/>
<dbReference type="KEGG" id="rhi:NGR_a01390"/>
<dbReference type="PATRIC" id="fig|394.7.peg.125"/>
<dbReference type="eggNOG" id="COG2843">
    <property type="taxonomic scope" value="Bacteria"/>
</dbReference>
<dbReference type="HOGENOM" id="CLU_038823_2_0_5"/>
<dbReference type="OrthoDB" id="9810718at2"/>
<dbReference type="Proteomes" id="UP000001054">
    <property type="component" value="Plasmid pNGR234a"/>
</dbReference>
<dbReference type="CDD" id="cd07381">
    <property type="entry name" value="MPP_CapA"/>
    <property type="match status" value="1"/>
</dbReference>
<dbReference type="InterPro" id="IPR019079">
    <property type="entry name" value="Capsule_synth_CapA"/>
</dbReference>
<dbReference type="InterPro" id="IPR052169">
    <property type="entry name" value="CW_Biosynth-Accessory"/>
</dbReference>
<dbReference type="InterPro" id="IPR029052">
    <property type="entry name" value="Metallo-depent_PP-like"/>
</dbReference>
<dbReference type="PANTHER" id="PTHR33393">
    <property type="entry name" value="POLYGLUTAMINE SYNTHESIS ACCESSORY PROTEIN RV0574C-RELATED"/>
    <property type="match status" value="1"/>
</dbReference>
<dbReference type="PANTHER" id="PTHR33393:SF11">
    <property type="entry name" value="POLYGLUTAMINE SYNTHESIS ACCESSORY PROTEIN RV0574C-RELATED"/>
    <property type="match status" value="1"/>
</dbReference>
<dbReference type="Pfam" id="PF09587">
    <property type="entry name" value="PGA_cap"/>
    <property type="match status" value="1"/>
</dbReference>
<dbReference type="SMART" id="SM00854">
    <property type="entry name" value="PGA_cap"/>
    <property type="match status" value="1"/>
</dbReference>
<dbReference type="SUPFAM" id="SSF56300">
    <property type="entry name" value="Metallo-dependent phosphatases"/>
    <property type="match status" value="1"/>
</dbReference>
<gene>
    <name type="ordered locus">NGR_a01390</name>
    <name type="ORF">y4uA</name>
</gene>
<organism>
    <name type="scientific">Sinorhizobium fredii (strain NBRC 101917 / NGR234)</name>
    <dbReference type="NCBI Taxonomy" id="394"/>
    <lineage>
        <taxon>Bacteria</taxon>
        <taxon>Pseudomonadati</taxon>
        <taxon>Pseudomonadota</taxon>
        <taxon>Alphaproteobacteria</taxon>
        <taxon>Hyphomicrobiales</taxon>
        <taxon>Rhizobiaceae</taxon>
        <taxon>Sinorhizobium/Ensifer group</taxon>
        <taxon>Sinorhizobium</taxon>
    </lineage>
</organism>
<feature type="chain" id="PRO_0000200950" description="Uncharacterized protein y4uA">
    <location>
        <begin position="1"/>
        <end position="461"/>
    </location>
</feature>
<feature type="region of interest" description="Disordered" evidence="1">
    <location>
        <begin position="1"/>
        <end position="21"/>
    </location>
</feature>
<feature type="compositionally biased region" description="Basic and acidic residues" evidence="1">
    <location>
        <begin position="1"/>
        <end position="19"/>
    </location>
</feature>
<accession>Q53195</accession>
<proteinExistence type="inferred from homology"/>
<name>Y4UA_SINFN</name>
<evidence type="ECO:0000256" key="1">
    <source>
        <dbReference type="SAM" id="MobiDB-lite"/>
    </source>
</evidence>
<evidence type="ECO:0000305" key="2"/>
<keyword id="KW-0614">Plasmid</keyword>
<keyword id="KW-1185">Reference proteome</keyword>
<geneLocation type="plasmid">
    <name>sym pNGR234a</name>
</geneLocation>
<comment type="function">
    <text>Could be involved in the biosynthesis of a cell wall component.</text>
</comment>
<comment type="similarity">
    <text evidence="2">Belongs to the CapA family.</text>
</comment>
<reference key="1">
    <citation type="journal article" date="1996" name="Genome Res.">
        <title>Sequencing the 500-kb GC-rich symbiotic replicon of Rhizobium sp. NGR234 using dye terminators and a thermostable 'sequenase': a beginning.</title>
        <authorList>
            <person name="Freiberg C."/>
            <person name="Perret X."/>
            <person name="Broughton W.J."/>
            <person name="Rosenthal A."/>
        </authorList>
    </citation>
    <scope>NUCLEOTIDE SEQUENCE [GENOMIC DNA]</scope>
</reference>
<reference key="2">
    <citation type="journal article" date="1997" name="Nature">
        <title>Molecular basis of symbiosis between Rhizobium and legumes.</title>
        <authorList>
            <person name="Freiberg C.A."/>
            <person name="Fellay R."/>
            <person name="Bairoch A."/>
            <person name="Broughton W.J."/>
            <person name="Rosenthal A."/>
            <person name="Perret X."/>
        </authorList>
    </citation>
    <scope>NUCLEOTIDE SEQUENCE [LARGE SCALE GENOMIC DNA]</scope>
    <source>
        <strain>NBRC 101917 / NGR234</strain>
    </source>
</reference>
<reference key="3">
    <citation type="journal article" date="2009" name="Appl. Environ. Microbiol.">
        <title>Rhizobium sp. strain NGR234 possesses a remarkable number of secretion systems.</title>
        <authorList>
            <person name="Schmeisser C."/>
            <person name="Liesegang H."/>
            <person name="Krysciak D."/>
            <person name="Bakkou N."/>
            <person name="Le Quere A."/>
            <person name="Wollherr A."/>
            <person name="Heinemeyer I."/>
            <person name="Morgenstern B."/>
            <person name="Pommerening-Roeser A."/>
            <person name="Flores M."/>
            <person name="Palacios R."/>
            <person name="Brenner S."/>
            <person name="Gottschalk G."/>
            <person name="Schmitz R.A."/>
            <person name="Broughton W.J."/>
            <person name="Perret X."/>
            <person name="Strittmatter A.W."/>
            <person name="Streit W.R."/>
        </authorList>
    </citation>
    <scope>NUCLEOTIDE SEQUENCE [LARGE SCALE GENOMIC DNA]</scope>
    <source>
        <strain>NBRC 101917 / NGR234</strain>
    </source>
</reference>
<protein>
    <recommendedName>
        <fullName>Uncharacterized protein y4uA</fullName>
    </recommendedName>
</protein>
<sequence length="461" mass="50639">MEKCSHESGRHSAENDGKYDITGSTATNVVDGFTMVAVGDVIVSRALANGHHPGFSEIVELLRAADVTFGNMETLIFDIRSFNGTPQAEYGGAYHVSLPEIGPDLKAMGFNIMGRANNHSLDWGVEGMRETSRILDESGIIHAGVGESRAQASAARLLETARGRVALLSCATSFTPMSRACDPAGEAPARPGVNALRLERSVVVEPDMLESLRKIRDALPNPGPKHDDREMLVLAGTTYRTGKDVGYTYAANTRDLADILRNVRRGKQYSDFCIFTNHAHEPGNWSEEPADFEQALARKLIDAGADAYVGHGPHRLRGIEIYKRRPIFYSLGNFFYDDLRTPVGADMYDVYDKDPQVDTDAEVTAAEETMGYPTAAGFIGALAEPVYYESVVAVSRFEENQLAELRLYPIELGYSKRLANRGVPSLAPRPQAISILERLQRLSEPFGTRITIEDRVGLIRL</sequence>